<protein>
    <recommendedName>
        <fullName evidence="1">Large ribosomal subunit protein bL21</fullName>
    </recommendedName>
    <alternativeName>
        <fullName evidence="2">50S ribosomal protein L21</fullName>
    </alternativeName>
</protein>
<keyword id="KW-1185">Reference proteome</keyword>
<keyword id="KW-0687">Ribonucleoprotein</keyword>
<keyword id="KW-0689">Ribosomal protein</keyword>
<keyword id="KW-0694">RNA-binding</keyword>
<keyword id="KW-0699">rRNA-binding</keyword>
<organism>
    <name type="scientific">Oleidesulfovibrio alaskensis (strain ATCC BAA-1058 / DSM 17464 / G20)</name>
    <name type="common">Desulfovibrio alaskensis</name>
    <dbReference type="NCBI Taxonomy" id="207559"/>
    <lineage>
        <taxon>Bacteria</taxon>
        <taxon>Pseudomonadati</taxon>
        <taxon>Thermodesulfobacteriota</taxon>
        <taxon>Desulfovibrionia</taxon>
        <taxon>Desulfovibrionales</taxon>
        <taxon>Desulfovibrionaceae</taxon>
        <taxon>Oleidesulfovibrio</taxon>
    </lineage>
</organism>
<name>RL21_OLEA2</name>
<sequence>MYAIIETGGKQFRVEEGCKIFVEKLAADAGSEIAIDKVLMLGGDKFAVGAPYVENAKVTAEVIEHGRGEKVITFRKWRRNDSRKKQGHRQDYTALKIKTITA</sequence>
<evidence type="ECO:0000255" key="1">
    <source>
        <dbReference type="HAMAP-Rule" id="MF_01363"/>
    </source>
</evidence>
<evidence type="ECO:0000305" key="2"/>
<gene>
    <name evidence="1" type="primary">rplU</name>
    <name type="ordered locus">Dde_2692</name>
</gene>
<comment type="function">
    <text evidence="1">This protein binds to 23S rRNA in the presence of protein L20.</text>
</comment>
<comment type="subunit">
    <text evidence="1">Part of the 50S ribosomal subunit. Contacts protein L20.</text>
</comment>
<comment type="similarity">
    <text evidence="1">Belongs to the bacterial ribosomal protein bL21 family.</text>
</comment>
<reference key="1">
    <citation type="journal article" date="2011" name="J. Bacteriol.">
        <title>Complete genome sequence and updated annotation of Desulfovibrio alaskensis G20.</title>
        <authorList>
            <person name="Hauser L.J."/>
            <person name="Land M.L."/>
            <person name="Brown S.D."/>
            <person name="Larimer F."/>
            <person name="Keller K.L."/>
            <person name="Rapp-Giles B.J."/>
            <person name="Price M.N."/>
            <person name="Lin M."/>
            <person name="Bruce D.C."/>
            <person name="Detter J.C."/>
            <person name="Tapia R."/>
            <person name="Han C.S."/>
            <person name="Goodwin L.A."/>
            <person name="Cheng J.F."/>
            <person name="Pitluck S."/>
            <person name="Copeland A."/>
            <person name="Lucas S."/>
            <person name="Nolan M."/>
            <person name="Lapidus A.L."/>
            <person name="Palumbo A.V."/>
            <person name="Wall J.D."/>
        </authorList>
    </citation>
    <scope>NUCLEOTIDE SEQUENCE [LARGE SCALE GENOMIC DNA]</scope>
    <source>
        <strain>ATCC BAA-1058 / DSM 17464 / G20</strain>
    </source>
</reference>
<accession>Q30XV8</accession>
<dbReference type="EMBL" id="CP000112">
    <property type="protein sequence ID" value="ABB39488.2"/>
    <property type="molecule type" value="Genomic_DNA"/>
</dbReference>
<dbReference type="RefSeq" id="WP_011368517.1">
    <property type="nucleotide sequence ID" value="NC_007519.1"/>
</dbReference>
<dbReference type="SMR" id="Q30XV8"/>
<dbReference type="STRING" id="207559.Dde_2692"/>
<dbReference type="KEGG" id="dde:Dde_2692"/>
<dbReference type="eggNOG" id="COG0261">
    <property type="taxonomic scope" value="Bacteria"/>
</dbReference>
<dbReference type="HOGENOM" id="CLU_061463_3_2_7"/>
<dbReference type="Proteomes" id="UP000002710">
    <property type="component" value="Chromosome"/>
</dbReference>
<dbReference type="GO" id="GO:0005737">
    <property type="term" value="C:cytoplasm"/>
    <property type="evidence" value="ECO:0007669"/>
    <property type="project" value="UniProtKB-ARBA"/>
</dbReference>
<dbReference type="GO" id="GO:1990904">
    <property type="term" value="C:ribonucleoprotein complex"/>
    <property type="evidence" value="ECO:0007669"/>
    <property type="project" value="UniProtKB-KW"/>
</dbReference>
<dbReference type="GO" id="GO:0005840">
    <property type="term" value="C:ribosome"/>
    <property type="evidence" value="ECO:0007669"/>
    <property type="project" value="UniProtKB-KW"/>
</dbReference>
<dbReference type="GO" id="GO:0019843">
    <property type="term" value="F:rRNA binding"/>
    <property type="evidence" value="ECO:0007669"/>
    <property type="project" value="UniProtKB-UniRule"/>
</dbReference>
<dbReference type="GO" id="GO:0003735">
    <property type="term" value="F:structural constituent of ribosome"/>
    <property type="evidence" value="ECO:0007669"/>
    <property type="project" value="InterPro"/>
</dbReference>
<dbReference type="GO" id="GO:0006412">
    <property type="term" value="P:translation"/>
    <property type="evidence" value="ECO:0007669"/>
    <property type="project" value="UniProtKB-UniRule"/>
</dbReference>
<dbReference type="HAMAP" id="MF_01363">
    <property type="entry name" value="Ribosomal_bL21"/>
    <property type="match status" value="1"/>
</dbReference>
<dbReference type="InterPro" id="IPR028909">
    <property type="entry name" value="bL21-like"/>
</dbReference>
<dbReference type="InterPro" id="IPR036164">
    <property type="entry name" value="bL21-like_sf"/>
</dbReference>
<dbReference type="InterPro" id="IPR001787">
    <property type="entry name" value="Ribosomal_bL21"/>
</dbReference>
<dbReference type="NCBIfam" id="TIGR00061">
    <property type="entry name" value="L21"/>
    <property type="match status" value="1"/>
</dbReference>
<dbReference type="PANTHER" id="PTHR21349">
    <property type="entry name" value="50S RIBOSOMAL PROTEIN L21"/>
    <property type="match status" value="1"/>
</dbReference>
<dbReference type="PANTHER" id="PTHR21349:SF0">
    <property type="entry name" value="LARGE RIBOSOMAL SUBUNIT PROTEIN BL21M"/>
    <property type="match status" value="1"/>
</dbReference>
<dbReference type="Pfam" id="PF00829">
    <property type="entry name" value="Ribosomal_L21p"/>
    <property type="match status" value="1"/>
</dbReference>
<dbReference type="SUPFAM" id="SSF141091">
    <property type="entry name" value="L21p-like"/>
    <property type="match status" value="1"/>
</dbReference>
<feature type="chain" id="PRO_0000269313" description="Large ribosomal subunit protein bL21">
    <location>
        <begin position="1"/>
        <end position="102"/>
    </location>
</feature>
<proteinExistence type="inferred from homology"/>